<reference key="1">
    <citation type="journal article" date="2006" name="Proc. Natl. Acad. Sci. U.S.A.">
        <title>Genome sequence of Synechococcus CC9311: insights into adaptation to a coastal environment.</title>
        <authorList>
            <person name="Palenik B."/>
            <person name="Ren Q."/>
            <person name="Dupont C.L."/>
            <person name="Myers G.S."/>
            <person name="Heidelberg J.F."/>
            <person name="Badger J.H."/>
            <person name="Madupu R."/>
            <person name="Nelson W.C."/>
            <person name="Brinkac L.M."/>
            <person name="Dodson R.J."/>
            <person name="Durkin A.S."/>
            <person name="Daugherty S.C."/>
            <person name="Sullivan S.A."/>
            <person name="Khouri H."/>
            <person name="Mohamoud Y."/>
            <person name="Halpin R."/>
            <person name="Paulsen I.T."/>
        </authorList>
    </citation>
    <scope>NUCLEOTIDE SEQUENCE [LARGE SCALE GENOMIC DNA]</scope>
    <source>
        <strain>CC9311</strain>
    </source>
</reference>
<proteinExistence type="inferred from homology"/>
<sequence>MMTASQRYDTKIHRRVTRTVMVGDVPIGSEHPIAVQSMINEDTLDIDGSVAGILRLADAGCEIVRVTTPSIGHAKAMGKIRSALRAQGCKIPLVADVHHNGTRIALEVAKHVDKVRINPGLFVFDKPDPDRQEFSKEEFDAIGDRIKETFAPLVQVLKEQNKALRIGVNHGSLAERMLFTYGDTPQGMVESAMEFVRICDSLDFHNIVISMKASRAPVMLAAYRLMADTMDREGFNYPLHLGVTEAGDGDYGRIKSTAGIATLLAEGLGDTLRVSLTEAPEKEIPVCFSILQALGIRKTMVEYVACPSCGRTLFNLEEVLHQVRNATCHLTGLDIAVMGCIVNGPGEMADADYGYVGKGPGVIALYRNRDEIRKVPESEGVEALVQLIKDDGRWVEPD</sequence>
<organism>
    <name type="scientific">Synechococcus sp. (strain CC9311)</name>
    <dbReference type="NCBI Taxonomy" id="64471"/>
    <lineage>
        <taxon>Bacteria</taxon>
        <taxon>Bacillati</taxon>
        <taxon>Cyanobacteriota</taxon>
        <taxon>Cyanophyceae</taxon>
        <taxon>Synechococcales</taxon>
        <taxon>Synechococcaceae</taxon>
        <taxon>Synechococcus</taxon>
    </lineage>
</organism>
<gene>
    <name evidence="1" type="primary">ispG</name>
    <name type="ordered locus">sync_1674</name>
</gene>
<accession>Q0I9J4</accession>
<keyword id="KW-0004">4Fe-4S</keyword>
<keyword id="KW-0408">Iron</keyword>
<keyword id="KW-0411">Iron-sulfur</keyword>
<keyword id="KW-0414">Isoprene biosynthesis</keyword>
<keyword id="KW-0479">Metal-binding</keyword>
<keyword id="KW-0560">Oxidoreductase</keyword>
<keyword id="KW-1185">Reference proteome</keyword>
<protein>
    <recommendedName>
        <fullName evidence="1">4-hydroxy-3-methylbut-2-en-1-yl diphosphate synthase (ferredoxin)</fullName>
        <ecNumber evidence="1">1.17.7.1</ecNumber>
    </recommendedName>
    <alternativeName>
        <fullName evidence="1">1-hydroxy-2-methyl-2-(E)-butenyl 4-diphosphate synthase</fullName>
    </alternativeName>
</protein>
<dbReference type="EC" id="1.17.7.1" evidence="1"/>
<dbReference type="EMBL" id="CP000435">
    <property type="protein sequence ID" value="ABI45063.1"/>
    <property type="molecule type" value="Genomic_DNA"/>
</dbReference>
<dbReference type="SMR" id="Q0I9J4"/>
<dbReference type="STRING" id="64471.sync_1674"/>
<dbReference type="KEGG" id="syg:sync_1674"/>
<dbReference type="eggNOG" id="COG0821">
    <property type="taxonomic scope" value="Bacteria"/>
</dbReference>
<dbReference type="HOGENOM" id="CLU_042258_0_0_3"/>
<dbReference type="UniPathway" id="UPA00056">
    <property type="reaction ID" value="UER00096"/>
</dbReference>
<dbReference type="Proteomes" id="UP000001961">
    <property type="component" value="Chromosome"/>
</dbReference>
<dbReference type="GO" id="GO:0051539">
    <property type="term" value="F:4 iron, 4 sulfur cluster binding"/>
    <property type="evidence" value="ECO:0007669"/>
    <property type="project" value="UniProtKB-UniRule"/>
</dbReference>
<dbReference type="GO" id="GO:0046429">
    <property type="term" value="F:4-hydroxy-3-methylbut-2-en-1-yl diphosphate synthase activity (ferredoxin)"/>
    <property type="evidence" value="ECO:0007669"/>
    <property type="project" value="UniProtKB-UniRule"/>
</dbReference>
<dbReference type="GO" id="GO:0005506">
    <property type="term" value="F:iron ion binding"/>
    <property type="evidence" value="ECO:0007669"/>
    <property type="project" value="InterPro"/>
</dbReference>
<dbReference type="GO" id="GO:0019288">
    <property type="term" value="P:isopentenyl diphosphate biosynthetic process, methylerythritol 4-phosphate pathway"/>
    <property type="evidence" value="ECO:0007669"/>
    <property type="project" value="UniProtKB-UniRule"/>
</dbReference>
<dbReference type="GO" id="GO:0016114">
    <property type="term" value="P:terpenoid biosynthetic process"/>
    <property type="evidence" value="ECO:0007669"/>
    <property type="project" value="InterPro"/>
</dbReference>
<dbReference type="FunFam" id="3.20.20.20:FF:000005">
    <property type="entry name" value="4-hydroxy-3-methylbut-2-en-1-yl diphosphate synthase (flavodoxin)"/>
    <property type="match status" value="1"/>
</dbReference>
<dbReference type="Gene3D" id="3.20.20.20">
    <property type="entry name" value="Dihydropteroate synthase-like"/>
    <property type="match status" value="1"/>
</dbReference>
<dbReference type="Gene3D" id="3.30.413.10">
    <property type="entry name" value="Sulfite Reductase Hemoprotein, domain 1"/>
    <property type="match status" value="1"/>
</dbReference>
<dbReference type="HAMAP" id="MF_00159">
    <property type="entry name" value="IspG"/>
    <property type="match status" value="1"/>
</dbReference>
<dbReference type="InterPro" id="IPR011005">
    <property type="entry name" value="Dihydropteroate_synth-like_sf"/>
</dbReference>
<dbReference type="InterPro" id="IPR016425">
    <property type="entry name" value="IspG_bac"/>
</dbReference>
<dbReference type="InterPro" id="IPR004588">
    <property type="entry name" value="IspG_bac-typ"/>
</dbReference>
<dbReference type="InterPro" id="IPR045854">
    <property type="entry name" value="NO2/SO3_Rdtase_4Fe4S_sf"/>
</dbReference>
<dbReference type="NCBIfam" id="TIGR00612">
    <property type="entry name" value="ispG_gcpE"/>
    <property type="match status" value="1"/>
</dbReference>
<dbReference type="NCBIfam" id="NF001540">
    <property type="entry name" value="PRK00366.1"/>
    <property type="match status" value="1"/>
</dbReference>
<dbReference type="PANTHER" id="PTHR30454">
    <property type="entry name" value="4-HYDROXY-3-METHYLBUT-2-EN-1-YL DIPHOSPHATE SYNTHASE"/>
    <property type="match status" value="1"/>
</dbReference>
<dbReference type="PANTHER" id="PTHR30454:SF0">
    <property type="entry name" value="4-HYDROXY-3-METHYLBUT-2-EN-1-YL DIPHOSPHATE SYNTHASE (FERREDOXIN), CHLOROPLASTIC"/>
    <property type="match status" value="1"/>
</dbReference>
<dbReference type="Pfam" id="PF04551">
    <property type="entry name" value="GcpE"/>
    <property type="match status" value="1"/>
</dbReference>
<dbReference type="PIRSF" id="PIRSF004640">
    <property type="entry name" value="IspG"/>
    <property type="match status" value="1"/>
</dbReference>
<dbReference type="SUPFAM" id="SSF56014">
    <property type="entry name" value="Nitrite and sulphite reductase 4Fe-4S domain-like"/>
    <property type="match status" value="1"/>
</dbReference>
<evidence type="ECO:0000255" key="1">
    <source>
        <dbReference type="HAMAP-Rule" id="MF_00159"/>
    </source>
</evidence>
<comment type="function">
    <text evidence="1">Converts 2C-methyl-D-erythritol 2,4-cyclodiphosphate (ME-2,4cPP) into 1-hydroxy-2-methyl-2-(E)-butenyl 4-diphosphate.</text>
</comment>
<comment type="catalytic activity">
    <reaction evidence="1">
        <text>(2E)-4-hydroxy-3-methylbut-2-enyl diphosphate + 2 oxidized [2Fe-2S]-[ferredoxin] + H2O = 2-C-methyl-D-erythritol 2,4-cyclic diphosphate + 2 reduced [2Fe-2S]-[ferredoxin] + H(+)</text>
        <dbReference type="Rhea" id="RHEA:26119"/>
        <dbReference type="Rhea" id="RHEA-COMP:10000"/>
        <dbReference type="Rhea" id="RHEA-COMP:10001"/>
        <dbReference type="ChEBI" id="CHEBI:15377"/>
        <dbReference type="ChEBI" id="CHEBI:15378"/>
        <dbReference type="ChEBI" id="CHEBI:33737"/>
        <dbReference type="ChEBI" id="CHEBI:33738"/>
        <dbReference type="ChEBI" id="CHEBI:58483"/>
        <dbReference type="ChEBI" id="CHEBI:128753"/>
        <dbReference type="EC" id="1.17.7.1"/>
    </reaction>
</comment>
<comment type="cofactor">
    <cofactor evidence="1">
        <name>[4Fe-4S] cluster</name>
        <dbReference type="ChEBI" id="CHEBI:49883"/>
    </cofactor>
    <text evidence="1">Binds 1 [4Fe-4S] cluster.</text>
</comment>
<comment type="pathway">
    <text evidence="1">Isoprenoid biosynthesis; isopentenyl diphosphate biosynthesis via DXP pathway; isopentenyl diphosphate from 1-deoxy-D-xylulose 5-phosphate: step 5/6.</text>
</comment>
<comment type="similarity">
    <text evidence="1">Belongs to the IspG family.</text>
</comment>
<name>ISPG_SYNS3</name>
<feature type="chain" id="PRO_1000011535" description="4-hydroxy-3-methylbut-2-en-1-yl diphosphate synthase (ferredoxin)">
    <location>
        <begin position="1"/>
        <end position="398"/>
    </location>
</feature>
<feature type="binding site" evidence="1">
    <location>
        <position position="306"/>
    </location>
    <ligand>
        <name>[4Fe-4S] cluster</name>
        <dbReference type="ChEBI" id="CHEBI:49883"/>
    </ligand>
</feature>
<feature type="binding site" evidence="1">
    <location>
        <position position="309"/>
    </location>
    <ligand>
        <name>[4Fe-4S] cluster</name>
        <dbReference type="ChEBI" id="CHEBI:49883"/>
    </ligand>
</feature>
<feature type="binding site" evidence="1">
    <location>
        <position position="340"/>
    </location>
    <ligand>
        <name>[4Fe-4S] cluster</name>
        <dbReference type="ChEBI" id="CHEBI:49883"/>
    </ligand>
</feature>
<feature type="binding site" evidence="1">
    <location>
        <position position="347"/>
    </location>
    <ligand>
        <name>[4Fe-4S] cluster</name>
        <dbReference type="ChEBI" id="CHEBI:49883"/>
    </ligand>
</feature>